<sequence>MVDSVYRTRSLGVAAEGLPDQYADGEAARVWQLYIGDTRSRTSEYKTWLLGLLRQHGCRRVLDVACGTGVDSIMLVEEGFSVTSVDASDKMLKYALKERWNRRHEPAFDKWVIEEANWMTLDKDVPQPAGGGFDAVICLGNSFAHLPDCKGDQSEHRQALKNIASMVRTGGLLVIDHRNYDHILSTGCAPPGKNIYYKSDLTKDVTTSVLTVNNKAHMVTLDYTVQVPAAGQDGPPSLSKFRLSYYPHCLAPFTELLRAAFEGKCQHSVLGDFKPYQPGQAYVPCYFIHVLKRTA</sequence>
<reference key="1">
    <citation type="journal article" date="2011" name="Nature">
        <title>A high-resolution map of human evolutionary constraint using 29 mammals.</title>
        <authorList>
            <person name="Lindblad-Toh K."/>
            <person name="Garber M."/>
            <person name="Zuk O."/>
            <person name="Lin M.F."/>
            <person name="Parker B.J."/>
            <person name="Washietl S."/>
            <person name="Kheradpour P."/>
            <person name="Ernst J."/>
            <person name="Jordan G."/>
            <person name="Mauceli E."/>
            <person name="Ward L.D."/>
            <person name="Lowe C.B."/>
            <person name="Holloway A.K."/>
            <person name="Clamp M."/>
            <person name="Gnerre S."/>
            <person name="Alfoldi J."/>
            <person name="Beal K."/>
            <person name="Chang J."/>
            <person name="Clawson H."/>
            <person name="Cuff J."/>
            <person name="Di Palma F."/>
            <person name="Fitzgerald S."/>
            <person name="Flicek P."/>
            <person name="Guttman M."/>
            <person name="Hubisz M.J."/>
            <person name="Jaffe D.B."/>
            <person name="Jungreis I."/>
            <person name="Kent W.J."/>
            <person name="Kostka D."/>
            <person name="Lara M."/>
            <person name="Martins A.L."/>
            <person name="Massingham T."/>
            <person name="Moltke I."/>
            <person name="Raney B.J."/>
            <person name="Rasmussen M.D."/>
            <person name="Robinson J."/>
            <person name="Stark A."/>
            <person name="Vilella A.J."/>
            <person name="Wen J."/>
            <person name="Xie X."/>
            <person name="Zody M.C."/>
            <person name="Baldwin J."/>
            <person name="Bloom T."/>
            <person name="Chin C.W."/>
            <person name="Heiman D."/>
            <person name="Nicol R."/>
            <person name="Nusbaum C."/>
            <person name="Young S."/>
            <person name="Wilkinson J."/>
            <person name="Worley K.C."/>
            <person name="Kovar C.L."/>
            <person name="Muzny D.M."/>
            <person name="Gibbs R.A."/>
            <person name="Cree A."/>
            <person name="Dihn H.H."/>
            <person name="Fowler G."/>
            <person name="Jhangiani S."/>
            <person name="Joshi V."/>
            <person name="Lee S."/>
            <person name="Lewis L.R."/>
            <person name="Nazareth L.V."/>
            <person name="Okwuonu G."/>
            <person name="Santibanez J."/>
            <person name="Warren W.C."/>
            <person name="Mardis E.R."/>
            <person name="Weinstock G.M."/>
            <person name="Wilson R.K."/>
            <person name="Delehaunty K."/>
            <person name="Dooling D."/>
            <person name="Fronik C."/>
            <person name="Fulton L."/>
            <person name="Fulton B."/>
            <person name="Graves T."/>
            <person name="Minx P."/>
            <person name="Sodergren E."/>
            <person name="Birney E."/>
            <person name="Margulies E.H."/>
            <person name="Herrero J."/>
            <person name="Green E.D."/>
            <person name="Haussler D."/>
            <person name="Siepel A."/>
            <person name="Goldman N."/>
            <person name="Pollard K.S."/>
            <person name="Pedersen J.S."/>
            <person name="Lander E.S."/>
            <person name="Kellis M."/>
        </authorList>
    </citation>
    <scope>NUCLEOTIDE SEQUENCE [LARGE SCALE GENOMIC DNA]</scope>
</reference>
<reference key="2">
    <citation type="journal article" date="1993" name="Comp. Biochem. Physiol.">
        <title>Mammalian glycine N-methyltransferases. Comparative kinetic and structural properties of the enzymes from human, rat, rabbit and pig livers.</title>
        <authorList>
            <person name="Ogawa H."/>
            <person name="Gomi T."/>
            <person name="Fujioka M."/>
        </authorList>
    </citation>
    <scope>NUCLEOTIDE SEQUENCE [MRNA] OF 3-295</scope>
    <scope>CATALYTIC ACTIVITY</scope>
    <scope>FUNCTION</scope>
    <source>
        <tissue>Liver</tissue>
    </source>
</reference>
<reference key="3">
    <citation type="journal article" date="1973" name="J. Biol. Chem.">
        <title>Purification and characterization of glycine N-methyltransferase.</title>
        <authorList>
            <person name="Heady J.E."/>
            <person name="Kerr S.J."/>
        </authorList>
    </citation>
    <scope>FUNCTION</scope>
    <scope>CATALYTIC ACTIVITY</scope>
    <scope>BIOPHYSICOCHEMICAL PROPERTIES</scope>
</reference>
<accession>Q29513</accession>
<accession>G1SKJ7</accession>
<dbReference type="EC" id="2.1.1.20" evidence="4 5"/>
<dbReference type="EMBL" id="AAGW02017997">
    <property type="status" value="NOT_ANNOTATED_CDS"/>
    <property type="molecule type" value="Genomic_DNA"/>
</dbReference>
<dbReference type="EMBL" id="D13307">
    <property type="protein sequence ID" value="BAA02567.1"/>
    <property type="molecule type" value="mRNA"/>
</dbReference>
<dbReference type="RefSeq" id="XP_002714459.1">
    <property type="nucleotide sequence ID" value="XM_002714413.5"/>
</dbReference>
<dbReference type="SMR" id="Q29513"/>
<dbReference type="FunCoup" id="Q29513">
    <property type="interactions" value="53"/>
</dbReference>
<dbReference type="STRING" id="9986.ENSOCUP00000003341"/>
<dbReference type="PaxDb" id="9986-ENSOCUP00000003341"/>
<dbReference type="Ensembl" id="ENSOCUT00000003855.3">
    <property type="protein sequence ID" value="ENSOCUP00000003341.2"/>
    <property type="gene ID" value="ENSOCUG00000003858.3"/>
</dbReference>
<dbReference type="GeneID" id="100009512"/>
<dbReference type="KEGG" id="ocu:100009512"/>
<dbReference type="CTD" id="27232"/>
<dbReference type="eggNOG" id="ENOG502QRN6">
    <property type="taxonomic scope" value="Eukaryota"/>
</dbReference>
<dbReference type="GeneTree" id="ENSGT00390000006845"/>
<dbReference type="HOGENOM" id="CLU_069129_0_0_1"/>
<dbReference type="InParanoid" id="Q29513"/>
<dbReference type="OMA" id="LETGCAP"/>
<dbReference type="OrthoDB" id="3647at2759"/>
<dbReference type="TreeFam" id="TF324814"/>
<dbReference type="SABIO-RK" id="Q29513"/>
<dbReference type="Proteomes" id="UP000001811">
    <property type="component" value="Chromosome 12"/>
</dbReference>
<dbReference type="Bgee" id="ENSOCUG00000003858">
    <property type="expression patterns" value="Expressed in liver and 16 other cell types or tissues"/>
</dbReference>
<dbReference type="GO" id="GO:0005829">
    <property type="term" value="C:cytosol"/>
    <property type="evidence" value="ECO:0000250"/>
    <property type="project" value="UniProtKB"/>
</dbReference>
<dbReference type="GO" id="GO:0005542">
    <property type="term" value="F:folic acid binding"/>
    <property type="evidence" value="ECO:0007669"/>
    <property type="project" value="UniProtKB-KW"/>
</dbReference>
<dbReference type="GO" id="GO:0016594">
    <property type="term" value="F:glycine binding"/>
    <property type="evidence" value="ECO:0000250"/>
    <property type="project" value="UniProtKB"/>
</dbReference>
<dbReference type="GO" id="GO:0017174">
    <property type="term" value="F:glycine N-methyltransferase activity"/>
    <property type="evidence" value="ECO:0000250"/>
    <property type="project" value="UniProtKB"/>
</dbReference>
<dbReference type="GO" id="GO:0042802">
    <property type="term" value="F:identical protein binding"/>
    <property type="evidence" value="ECO:0007669"/>
    <property type="project" value="Ensembl"/>
</dbReference>
<dbReference type="GO" id="GO:1904047">
    <property type="term" value="F:S-adenosyl-L-methionine binding"/>
    <property type="evidence" value="ECO:0007669"/>
    <property type="project" value="TreeGrafter"/>
</dbReference>
<dbReference type="GO" id="GO:0005977">
    <property type="term" value="P:glycogen metabolic process"/>
    <property type="evidence" value="ECO:0007669"/>
    <property type="project" value="Ensembl"/>
</dbReference>
<dbReference type="GO" id="GO:0006555">
    <property type="term" value="P:methionine metabolic process"/>
    <property type="evidence" value="ECO:0007669"/>
    <property type="project" value="Ensembl"/>
</dbReference>
<dbReference type="GO" id="GO:0032259">
    <property type="term" value="P:methylation"/>
    <property type="evidence" value="ECO:0007669"/>
    <property type="project" value="UniProtKB-KW"/>
</dbReference>
<dbReference type="GO" id="GO:0006730">
    <property type="term" value="P:one-carbon metabolic process"/>
    <property type="evidence" value="ECO:0007669"/>
    <property type="project" value="Ensembl"/>
</dbReference>
<dbReference type="GO" id="GO:0051289">
    <property type="term" value="P:protein homotetramerization"/>
    <property type="evidence" value="ECO:0007669"/>
    <property type="project" value="Ensembl"/>
</dbReference>
<dbReference type="GO" id="GO:0006111">
    <property type="term" value="P:regulation of gluconeogenesis"/>
    <property type="evidence" value="ECO:0007669"/>
    <property type="project" value="Ensembl"/>
</dbReference>
<dbReference type="GO" id="GO:0046498">
    <property type="term" value="P:S-adenosylhomocysteine metabolic process"/>
    <property type="evidence" value="ECO:0007669"/>
    <property type="project" value="TreeGrafter"/>
</dbReference>
<dbReference type="GO" id="GO:0046500">
    <property type="term" value="P:S-adenosylmethionine metabolic process"/>
    <property type="evidence" value="ECO:0000250"/>
    <property type="project" value="UniProtKB"/>
</dbReference>
<dbReference type="GO" id="GO:1901052">
    <property type="term" value="P:sarcosine metabolic process"/>
    <property type="evidence" value="ECO:0007669"/>
    <property type="project" value="TreeGrafter"/>
</dbReference>
<dbReference type="CDD" id="cd02440">
    <property type="entry name" value="AdoMet_MTases"/>
    <property type="match status" value="1"/>
</dbReference>
<dbReference type="FunFam" id="3.40.50.150:FF:000113">
    <property type="entry name" value="Glycine N-methyltransferase"/>
    <property type="match status" value="1"/>
</dbReference>
<dbReference type="Gene3D" id="3.30.46.10">
    <property type="entry name" value="Glycine N-methyltransferase, chain A, domain 1"/>
    <property type="match status" value="1"/>
</dbReference>
<dbReference type="Gene3D" id="3.40.50.150">
    <property type="entry name" value="Vaccinia Virus protein VP39"/>
    <property type="match status" value="1"/>
</dbReference>
<dbReference type="InterPro" id="IPR014369">
    <property type="entry name" value="Gly/Sar_N_MeTrfase"/>
</dbReference>
<dbReference type="InterPro" id="IPR041698">
    <property type="entry name" value="Methyltransf_25"/>
</dbReference>
<dbReference type="InterPro" id="IPR029063">
    <property type="entry name" value="SAM-dependent_MTases_sf"/>
</dbReference>
<dbReference type="PANTHER" id="PTHR16458">
    <property type="entry name" value="GLYCINE N-METHYLTRANSFERASE"/>
    <property type="match status" value="1"/>
</dbReference>
<dbReference type="PANTHER" id="PTHR16458:SF2">
    <property type="entry name" value="GLYCINE N-METHYLTRANSFERASE"/>
    <property type="match status" value="1"/>
</dbReference>
<dbReference type="Pfam" id="PF13649">
    <property type="entry name" value="Methyltransf_25"/>
    <property type="match status" value="1"/>
</dbReference>
<dbReference type="PIRSF" id="PIRSF000385">
    <property type="entry name" value="Gly_N-mtase"/>
    <property type="match status" value="1"/>
</dbReference>
<dbReference type="SUPFAM" id="SSF53335">
    <property type="entry name" value="S-adenosyl-L-methionine-dependent methyltransferases"/>
    <property type="match status" value="1"/>
</dbReference>
<dbReference type="PROSITE" id="PS51600">
    <property type="entry name" value="SAM_GNMT"/>
    <property type="match status" value="1"/>
</dbReference>
<proteinExistence type="evidence at protein level"/>
<gene>
    <name type="primary">GNMT</name>
</gene>
<feature type="initiator methionine" description="Removed" evidence="1">
    <location>
        <position position="1"/>
    </location>
</feature>
<feature type="chain" id="PRO_0000087527" description="Glycine N-methyltransferase">
    <location>
        <begin position="2"/>
        <end position="295"/>
    </location>
</feature>
<feature type="binding site" evidence="1">
    <location>
        <position position="4"/>
    </location>
    <ligand>
        <name>(6S)-5-methyl-5,6,7,8-tetrahydrofolate</name>
        <dbReference type="ChEBI" id="CHEBI:18608"/>
        <label>1</label>
        <note>ligand shared between tetrameric partners</note>
    </ligand>
</feature>
<feature type="binding site" evidence="1">
    <location>
        <position position="6"/>
    </location>
    <ligand>
        <name>(6S)-5-methyl-5,6,7,8-tetrahydrofolate</name>
        <dbReference type="ChEBI" id="CHEBI:18608"/>
        <label>1</label>
        <note>ligand shared between tetrameric partners</note>
    </ligand>
</feature>
<feature type="binding site" evidence="1">
    <location>
        <position position="6"/>
    </location>
    <ligand>
        <name>(6S)-5-methyl-5,6,7,8-tetrahydrofolate</name>
        <dbReference type="ChEBI" id="CHEBI:18608"/>
        <label>2</label>
        <note>ligand shared between tetrameric partners</note>
    </ligand>
</feature>
<feature type="binding site" evidence="1">
    <location>
        <position position="22"/>
    </location>
    <ligand>
        <name>S-adenosyl-L-methionine</name>
        <dbReference type="ChEBI" id="CHEBI:59789"/>
    </ligand>
</feature>
<feature type="binding site" evidence="1">
    <location>
        <position position="31"/>
    </location>
    <ligand>
        <name>S-adenosyl-L-methionine</name>
        <dbReference type="ChEBI" id="CHEBI:59789"/>
    </ligand>
</feature>
<feature type="binding site" evidence="1">
    <location>
        <position position="34"/>
    </location>
    <ligand>
        <name>S-adenosyl-L-methionine</name>
        <dbReference type="ChEBI" id="CHEBI:59789"/>
    </ligand>
</feature>
<feature type="binding site" evidence="1">
    <location>
        <position position="41"/>
    </location>
    <ligand>
        <name>S-adenosyl-L-methionine</name>
        <dbReference type="ChEBI" id="CHEBI:59789"/>
    </ligand>
</feature>
<feature type="binding site" evidence="1">
    <location>
        <position position="65"/>
    </location>
    <ligand>
        <name>S-adenosyl-L-methionine</name>
        <dbReference type="ChEBI" id="CHEBI:59789"/>
    </ligand>
</feature>
<feature type="binding site" evidence="1">
    <location>
        <begin position="86"/>
        <end position="88"/>
    </location>
    <ligand>
        <name>S-adenosyl-L-methionine</name>
        <dbReference type="ChEBI" id="CHEBI:59789"/>
    </ligand>
</feature>
<feature type="binding site" evidence="1">
    <location>
        <begin position="117"/>
        <end position="118"/>
    </location>
    <ligand>
        <name>S-adenosyl-L-methionine</name>
        <dbReference type="ChEBI" id="CHEBI:59789"/>
    </ligand>
</feature>
<feature type="binding site" evidence="1">
    <location>
        <begin position="139"/>
        <end position="142"/>
    </location>
    <ligand>
        <name>S-adenosyl-L-methionine</name>
        <dbReference type="ChEBI" id="CHEBI:59789"/>
    </ligand>
</feature>
<feature type="binding site" evidence="1">
    <location>
        <position position="178"/>
    </location>
    <ligand>
        <name>S-adenosyl-L-methionine</name>
        <dbReference type="ChEBI" id="CHEBI:59789"/>
    </ligand>
</feature>
<feature type="binding site" evidence="1">
    <location>
        <position position="217"/>
    </location>
    <ligand>
        <name>(6S)-5-methyl-5,6,7,8-tetrahydrofolate</name>
        <dbReference type="ChEBI" id="CHEBI:18608"/>
        <label>2</label>
        <note>ligand shared between tetrameric partners</note>
    </ligand>
</feature>
<feature type="binding site" evidence="1">
    <location>
        <position position="223"/>
    </location>
    <ligand>
        <name>S-adenosyl-L-methionine</name>
        <dbReference type="ChEBI" id="CHEBI:59789"/>
    </ligand>
</feature>
<feature type="binding site" evidence="1">
    <location>
        <position position="242"/>
    </location>
    <ligand>
        <name>(6S)-5-methyl-5,6,7,8-tetrahydrofolate</name>
        <dbReference type="ChEBI" id="CHEBI:18608"/>
        <label>1</label>
        <note>ligand shared between tetrameric partners</note>
    </ligand>
</feature>
<feature type="binding site" evidence="1">
    <location>
        <position position="242"/>
    </location>
    <ligand>
        <name>(6S)-5-methyl-5,6,7,8-tetrahydrofolate</name>
        <dbReference type="ChEBI" id="CHEBI:18608"/>
        <label>2</label>
        <note>ligand shared between tetrameric partners</note>
    </ligand>
</feature>
<feature type="modified residue" description="Phosphoserine" evidence="2">
    <location>
        <position position="10"/>
    </location>
</feature>
<feature type="modified residue" description="Phosphotyrosine" evidence="2">
    <location>
        <position position="34"/>
    </location>
</feature>
<feature type="modified residue" description="N6-succinyllysine" evidence="2">
    <location>
        <position position="46"/>
    </location>
</feature>
<feature type="modified residue" description="N6-succinyllysine" evidence="2">
    <location>
        <position position="193"/>
    </location>
</feature>
<feature type="modified residue" description="N6-succinyllysine" evidence="2">
    <location>
        <position position="198"/>
    </location>
</feature>
<feature type="modified residue" description="N6-succinyllysine" evidence="2">
    <location>
        <position position="203"/>
    </location>
</feature>
<feature type="sequence conflict" description="In Ref. 2; AAGW02017997." evidence="6" ref="2">
    <original>G</original>
    <variation>L</variation>
    <location>
        <position position="187"/>
    </location>
</feature>
<feature type="sequence conflict" description="In Ref. 2; AAGW02017997." evidence="6" ref="2">
    <location>
        <position position="191"/>
    </location>
</feature>
<feature type="sequence conflict" description="In Ref. 2; AAGW02017997." evidence="6" ref="2">
    <original>L</original>
    <variation>F</variation>
    <location>
        <position position="256"/>
    </location>
</feature>
<evidence type="ECO:0000250" key="1">
    <source>
        <dbReference type="UniProtKB" id="P13255"/>
    </source>
</evidence>
<evidence type="ECO:0000250" key="2">
    <source>
        <dbReference type="UniProtKB" id="Q9QXF8"/>
    </source>
</evidence>
<evidence type="ECO:0000255" key="3">
    <source>
        <dbReference type="PROSITE-ProRule" id="PRU00932"/>
    </source>
</evidence>
<evidence type="ECO:0000269" key="4">
    <source>
    </source>
</evidence>
<evidence type="ECO:0000269" key="5">
    <source>
    </source>
</evidence>
<evidence type="ECO:0000305" key="6"/>
<evidence type="ECO:0000305" key="7">
    <source>
    </source>
</evidence>
<comment type="function">
    <text evidence="1 4 5">Catalyzes the methylation of glycine by using S-adenosylmethionine (AdoMet) to form N-methylglycine (sarcosine) with the concomitant production of S-adenosylhomocysteine (AdoHcy), a reaction regulated by the binding of 5-methyltetrahydrofolate (PubMed:4692843, PubMed:8281755). Plays an important role in the regulation of methyl group metabolism by regulating the ratio between S-adenosyl-L-methionine and S-adenosyl-L-homocysteine (By similarity).</text>
</comment>
<comment type="catalytic activity">
    <reaction evidence="4 5">
        <text>glycine + S-adenosyl-L-methionine = sarcosine + S-adenosyl-L-homocysteine + H(+)</text>
        <dbReference type="Rhea" id="RHEA:19937"/>
        <dbReference type="ChEBI" id="CHEBI:15378"/>
        <dbReference type="ChEBI" id="CHEBI:57305"/>
        <dbReference type="ChEBI" id="CHEBI:57433"/>
        <dbReference type="ChEBI" id="CHEBI:57856"/>
        <dbReference type="ChEBI" id="CHEBI:59789"/>
        <dbReference type="EC" id="2.1.1.20"/>
    </reaction>
    <physiologicalReaction direction="left-to-right" evidence="7">
        <dbReference type="Rhea" id="RHEA:19938"/>
    </physiologicalReaction>
</comment>
<comment type="activity regulation">
    <text evidence="1">Inhibited by 5-methyltetrahydrofolate monoglutamate and by 5-methyltetrahydrofolate pentaglutamate, inhibition is much more effective by the pentaglutamate form than by the monoglutamate form. Two molecules of 5-methyltetrahydrofolate are bound per tetramer. The binding sites are localized between subunits. Inhibitor binding may preclude movements of the polypeptide chain that are necessary for enzyme activity.</text>
</comment>
<comment type="biophysicochemical properties">
    <kinetics>
        <KM evidence="4">0.1 mM for S-adenosyl-L-methionine</KM>
        <KM evidence="4">2.2 mM for glycine</KM>
    </kinetics>
</comment>
<comment type="subunit">
    <text evidence="1">Homotetramer.</text>
</comment>
<comment type="subcellular location">
    <subcellularLocation>
        <location evidence="1">Cytoplasm</location>
    </subcellularLocation>
</comment>
<comment type="tissue specificity">
    <text>Abundant in liver.</text>
</comment>
<comment type="similarity">
    <text evidence="3">Belongs to the class I-like SAM-binding methyltransferase superfamily. Glycine N-methyltransferase family.</text>
</comment>
<keyword id="KW-0963">Cytoplasm</keyword>
<keyword id="KW-0290">Folate-binding</keyword>
<keyword id="KW-0489">Methyltransferase</keyword>
<keyword id="KW-0597">Phosphoprotein</keyword>
<keyword id="KW-1185">Reference proteome</keyword>
<keyword id="KW-0949">S-adenosyl-L-methionine</keyword>
<keyword id="KW-0808">Transferase</keyword>
<protein>
    <recommendedName>
        <fullName>Glycine N-methyltransferase</fullName>
        <ecNumber evidence="4 5">2.1.1.20</ecNumber>
    </recommendedName>
</protein>
<organism>
    <name type="scientific">Oryctolagus cuniculus</name>
    <name type="common">Rabbit</name>
    <dbReference type="NCBI Taxonomy" id="9986"/>
    <lineage>
        <taxon>Eukaryota</taxon>
        <taxon>Metazoa</taxon>
        <taxon>Chordata</taxon>
        <taxon>Craniata</taxon>
        <taxon>Vertebrata</taxon>
        <taxon>Euteleostomi</taxon>
        <taxon>Mammalia</taxon>
        <taxon>Eutheria</taxon>
        <taxon>Euarchontoglires</taxon>
        <taxon>Glires</taxon>
        <taxon>Lagomorpha</taxon>
        <taxon>Leporidae</taxon>
        <taxon>Oryctolagus</taxon>
    </lineage>
</organism>
<name>GNMT_RABIT</name>